<reference key="1">
    <citation type="journal article" date="2003" name="Proc. Natl. Acad. Sci. U.S.A.">
        <title>Genome sequence of the cyanobacterium Prochlorococcus marinus SS120, a nearly minimal oxyphototrophic genome.</title>
        <authorList>
            <person name="Dufresne A."/>
            <person name="Salanoubat M."/>
            <person name="Partensky F."/>
            <person name="Artiguenave F."/>
            <person name="Axmann I.M."/>
            <person name="Barbe V."/>
            <person name="Duprat S."/>
            <person name="Galperin M.Y."/>
            <person name="Koonin E.V."/>
            <person name="Le Gall F."/>
            <person name="Makarova K.S."/>
            <person name="Ostrowski M."/>
            <person name="Oztas S."/>
            <person name="Robert C."/>
            <person name="Rogozin I.B."/>
            <person name="Scanlan D.J."/>
            <person name="Tandeau de Marsac N."/>
            <person name="Weissenbach J."/>
            <person name="Wincker P."/>
            <person name="Wolf Y.I."/>
            <person name="Hess W.R."/>
        </authorList>
    </citation>
    <scope>NUCLEOTIDE SEQUENCE [LARGE SCALE GENOMIC DNA]</scope>
    <source>
        <strain>SARG / CCMP1375 / SS120</strain>
    </source>
</reference>
<accession>Q7VD75</accession>
<proteinExistence type="inferred from homology"/>
<gene>
    <name evidence="1" type="primary">proS</name>
    <name type="ordered locus">Pro_0508</name>
</gene>
<organism>
    <name type="scientific">Prochlorococcus marinus (strain SARG / CCMP1375 / SS120)</name>
    <dbReference type="NCBI Taxonomy" id="167539"/>
    <lineage>
        <taxon>Bacteria</taxon>
        <taxon>Bacillati</taxon>
        <taxon>Cyanobacteriota</taxon>
        <taxon>Cyanophyceae</taxon>
        <taxon>Synechococcales</taxon>
        <taxon>Prochlorococcaceae</taxon>
        <taxon>Prochlorococcus</taxon>
    </lineage>
</organism>
<evidence type="ECO:0000255" key="1">
    <source>
        <dbReference type="HAMAP-Rule" id="MF_01569"/>
    </source>
</evidence>
<comment type="function">
    <text evidence="1">Catalyzes the attachment of proline to tRNA(Pro) in a two-step reaction: proline is first activated by ATP to form Pro-AMP and then transferred to the acceptor end of tRNA(Pro). As ProRS can inadvertently accommodate and process non-cognate amino acids such as alanine and cysteine, to avoid such errors it has two additional distinct editing activities against alanine. One activity is designated as 'pretransfer' editing and involves the tRNA(Pro)-independent hydrolysis of activated Ala-AMP. The other activity is designated 'posttransfer' editing and involves deacylation of mischarged Ala-tRNA(Pro). The misacylated Cys-tRNA(Pro) is not edited by ProRS.</text>
</comment>
<comment type="catalytic activity">
    <reaction evidence="1">
        <text>tRNA(Pro) + L-proline + ATP = L-prolyl-tRNA(Pro) + AMP + diphosphate</text>
        <dbReference type="Rhea" id="RHEA:14305"/>
        <dbReference type="Rhea" id="RHEA-COMP:9700"/>
        <dbReference type="Rhea" id="RHEA-COMP:9702"/>
        <dbReference type="ChEBI" id="CHEBI:30616"/>
        <dbReference type="ChEBI" id="CHEBI:33019"/>
        <dbReference type="ChEBI" id="CHEBI:60039"/>
        <dbReference type="ChEBI" id="CHEBI:78442"/>
        <dbReference type="ChEBI" id="CHEBI:78532"/>
        <dbReference type="ChEBI" id="CHEBI:456215"/>
        <dbReference type="EC" id="6.1.1.15"/>
    </reaction>
</comment>
<comment type="subunit">
    <text evidence="1">Homodimer.</text>
</comment>
<comment type="subcellular location">
    <subcellularLocation>
        <location evidence="1">Cytoplasm</location>
    </subcellularLocation>
</comment>
<comment type="domain">
    <text evidence="1">Consists of three domains: the N-terminal catalytic domain, the editing domain and the C-terminal anticodon-binding domain.</text>
</comment>
<comment type="similarity">
    <text evidence="1">Belongs to the class-II aminoacyl-tRNA synthetase family. ProS type 1 subfamily.</text>
</comment>
<feature type="chain" id="PRO_0000248737" description="Proline--tRNA ligase">
    <location>
        <begin position="1"/>
        <end position="603"/>
    </location>
</feature>
<name>SYP_PROMA</name>
<keyword id="KW-0030">Aminoacyl-tRNA synthetase</keyword>
<keyword id="KW-0067">ATP-binding</keyword>
<keyword id="KW-0963">Cytoplasm</keyword>
<keyword id="KW-0436">Ligase</keyword>
<keyword id="KW-0547">Nucleotide-binding</keyword>
<keyword id="KW-0648">Protein biosynthesis</keyword>
<keyword id="KW-1185">Reference proteome</keyword>
<protein>
    <recommendedName>
        <fullName evidence="1">Proline--tRNA ligase</fullName>
        <ecNumber evidence="1">6.1.1.15</ecNumber>
    </recommendedName>
    <alternativeName>
        <fullName evidence="1">Prolyl-tRNA synthetase</fullName>
        <shortName evidence="1">ProRS</shortName>
    </alternativeName>
</protein>
<dbReference type="EC" id="6.1.1.15" evidence="1"/>
<dbReference type="EMBL" id="AE017126">
    <property type="protein sequence ID" value="AAP99553.1"/>
    <property type="molecule type" value="Genomic_DNA"/>
</dbReference>
<dbReference type="RefSeq" id="NP_874901.1">
    <property type="nucleotide sequence ID" value="NC_005042.1"/>
</dbReference>
<dbReference type="RefSeq" id="WP_011124662.1">
    <property type="nucleotide sequence ID" value="NC_005042.1"/>
</dbReference>
<dbReference type="SMR" id="Q7VD75"/>
<dbReference type="STRING" id="167539.Pro_0508"/>
<dbReference type="EnsemblBacteria" id="AAP99553">
    <property type="protein sequence ID" value="AAP99553"/>
    <property type="gene ID" value="Pro_0508"/>
</dbReference>
<dbReference type="KEGG" id="pma:Pro_0508"/>
<dbReference type="PATRIC" id="fig|167539.5.peg.521"/>
<dbReference type="eggNOG" id="COG0442">
    <property type="taxonomic scope" value="Bacteria"/>
</dbReference>
<dbReference type="HOGENOM" id="CLU_016739_0_0_3"/>
<dbReference type="OrthoDB" id="9809052at2"/>
<dbReference type="Proteomes" id="UP000001420">
    <property type="component" value="Chromosome"/>
</dbReference>
<dbReference type="GO" id="GO:0005829">
    <property type="term" value="C:cytosol"/>
    <property type="evidence" value="ECO:0007669"/>
    <property type="project" value="TreeGrafter"/>
</dbReference>
<dbReference type="GO" id="GO:0002161">
    <property type="term" value="F:aminoacyl-tRNA deacylase activity"/>
    <property type="evidence" value="ECO:0007669"/>
    <property type="project" value="InterPro"/>
</dbReference>
<dbReference type="GO" id="GO:0005524">
    <property type="term" value="F:ATP binding"/>
    <property type="evidence" value="ECO:0007669"/>
    <property type="project" value="UniProtKB-UniRule"/>
</dbReference>
<dbReference type="GO" id="GO:0004827">
    <property type="term" value="F:proline-tRNA ligase activity"/>
    <property type="evidence" value="ECO:0007669"/>
    <property type="project" value="UniProtKB-UniRule"/>
</dbReference>
<dbReference type="GO" id="GO:0006433">
    <property type="term" value="P:prolyl-tRNA aminoacylation"/>
    <property type="evidence" value="ECO:0007669"/>
    <property type="project" value="UniProtKB-UniRule"/>
</dbReference>
<dbReference type="CDD" id="cd04334">
    <property type="entry name" value="ProRS-INS"/>
    <property type="match status" value="1"/>
</dbReference>
<dbReference type="CDD" id="cd00861">
    <property type="entry name" value="ProRS_anticodon_short"/>
    <property type="match status" value="1"/>
</dbReference>
<dbReference type="CDD" id="cd00779">
    <property type="entry name" value="ProRS_core_prok"/>
    <property type="match status" value="1"/>
</dbReference>
<dbReference type="FunFam" id="3.40.50.800:FF:000011">
    <property type="entry name" value="Proline--tRNA ligase"/>
    <property type="match status" value="1"/>
</dbReference>
<dbReference type="Gene3D" id="3.40.50.800">
    <property type="entry name" value="Anticodon-binding domain"/>
    <property type="match status" value="1"/>
</dbReference>
<dbReference type="Gene3D" id="3.30.930.10">
    <property type="entry name" value="Bira Bifunctional Protein, Domain 2"/>
    <property type="match status" value="2"/>
</dbReference>
<dbReference type="Gene3D" id="3.90.960.10">
    <property type="entry name" value="YbaK/aminoacyl-tRNA synthetase-associated domain"/>
    <property type="match status" value="1"/>
</dbReference>
<dbReference type="HAMAP" id="MF_01569">
    <property type="entry name" value="Pro_tRNA_synth_type1"/>
    <property type="match status" value="1"/>
</dbReference>
<dbReference type="InterPro" id="IPR002314">
    <property type="entry name" value="aa-tRNA-synt_IIb"/>
</dbReference>
<dbReference type="InterPro" id="IPR006195">
    <property type="entry name" value="aa-tRNA-synth_II"/>
</dbReference>
<dbReference type="InterPro" id="IPR045864">
    <property type="entry name" value="aa-tRNA-synth_II/BPL/LPL"/>
</dbReference>
<dbReference type="InterPro" id="IPR004154">
    <property type="entry name" value="Anticodon-bd"/>
</dbReference>
<dbReference type="InterPro" id="IPR036621">
    <property type="entry name" value="Anticodon-bd_dom_sf"/>
</dbReference>
<dbReference type="InterPro" id="IPR002316">
    <property type="entry name" value="Pro-tRNA-ligase_IIa"/>
</dbReference>
<dbReference type="InterPro" id="IPR004500">
    <property type="entry name" value="Pro-tRNA-synth_IIa_bac-type"/>
</dbReference>
<dbReference type="InterPro" id="IPR023717">
    <property type="entry name" value="Pro-tRNA-Synthase_IIa_type1"/>
</dbReference>
<dbReference type="InterPro" id="IPR050062">
    <property type="entry name" value="Pro-tRNA_synthetase"/>
</dbReference>
<dbReference type="InterPro" id="IPR044140">
    <property type="entry name" value="ProRS_anticodon_short"/>
</dbReference>
<dbReference type="InterPro" id="IPR033730">
    <property type="entry name" value="ProRS_core_prok"/>
</dbReference>
<dbReference type="InterPro" id="IPR036754">
    <property type="entry name" value="YbaK/aa-tRNA-synt-asso_dom_sf"/>
</dbReference>
<dbReference type="NCBIfam" id="NF006625">
    <property type="entry name" value="PRK09194.1"/>
    <property type="match status" value="1"/>
</dbReference>
<dbReference type="NCBIfam" id="TIGR00409">
    <property type="entry name" value="proS_fam_II"/>
    <property type="match status" value="1"/>
</dbReference>
<dbReference type="PANTHER" id="PTHR42753">
    <property type="entry name" value="MITOCHONDRIAL RIBOSOME PROTEIN L39/PROLYL-TRNA LIGASE FAMILY MEMBER"/>
    <property type="match status" value="1"/>
</dbReference>
<dbReference type="PANTHER" id="PTHR42753:SF2">
    <property type="entry name" value="PROLINE--TRNA LIGASE"/>
    <property type="match status" value="1"/>
</dbReference>
<dbReference type="Pfam" id="PF03129">
    <property type="entry name" value="HGTP_anticodon"/>
    <property type="match status" value="1"/>
</dbReference>
<dbReference type="Pfam" id="PF00587">
    <property type="entry name" value="tRNA-synt_2b"/>
    <property type="match status" value="1"/>
</dbReference>
<dbReference type="PRINTS" id="PR01046">
    <property type="entry name" value="TRNASYNTHPRO"/>
</dbReference>
<dbReference type="SUPFAM" id="SSF52954">
    <property type="entry name" value="Class II aaRS ABD-related"/>
    <property type="match status" value="1"/>
</dbReference>
<dbReference type="SUPFAM" id="SSF55681">
    <property type="entry name" value="Class II aaRS and biotin synthetases"/>
    <property type="match status" value="1"/>
</dbReference>
<dbReference type="SUPFAM" id="SSF55826">
    <property type="entry name" value="YbaK/ProRS associated domain"/>
    <property type="match status" value="1"/>
</dbReference>
<dbReference type="PROSITE" id="PS50862">
    <property type="entry name" value="AA_TRNA_LIGASE_II"/>
    <property type="match status" value="1"/>
</dbReference>
<sequence>MRVSRLMLVTLRDVPAEAEIVSHQLLIRGGFIKRVTSGIYAYMPLMWKVIKKITSIVQEELDSKGCLETLLPQLHPAELWKESGRWDGYTAGEGIMFHLSDRQGRELGLGPTHEEVITKIANEFLQSYKQLPVNLYQIQTKFRDEIRPRFGLMRSREFIMKDAYSFHADETNLKETYLEMNDAYEKIFKRCGLETVAVDADSGAIGGAESREFMVTAEAGEDLILLSPDKKYAANQEKAISKFADPIFLDKKEPCIIQTNGQRTIKELCDNQGFHPSQILKVIILLAVLEKNDLQPILVSIRGDQELNEVKLINAVSKYLKKSVISIKTITKEQLDSQKLLDIPLGFVGPDLKDSYLNKAANWNKKFIRFTDITASNLDSFICGANTIDQHRAFVNWSKVGGLPEIVDIRNAMPGDISIHDPKQKLIAKRGIEVGHIFQLGRKYSSCLQASFTNEMGLEEPFWMGCYGIGISRLAQASVEQNYDQSGIIWPLGIAPFEVIVIVANMKDDLQRELGEKLYSQLKDEGVDVLIDDRKERAGVKFKDADLIGIPWKIISGRDSATGIVELVERSTGISKSLKAEEAIKELLEEISNYKKSILQESL</sequence>